<accession>Q88RX5</accession>
<accession>F9ULM4</accession>
<evidence type="ECO:0000255" key="1">
    <source>
        <dbReference type="HAMAP-Rule" id="MF_00379"/>
    </source>
</evidence>
<comment type="function">
    <text evidence="1">Exhibits a very high intrinsic GTPase hydrolysis rate. Involved in the addition of a carboxymethylaminomethyl (cmnm) group at the wobble position (U34) of certain tRNAs, forming tRNA-cmnm(5)s(2)U34.</text>
</comment>
<comment type="cofactor">
    <cofactor evidence="1">
        <name>K(+)</name>
        <dbReference type="ChEBI" id="CHEBI:29103"/>
    </cofactor>
    <text evidence="1">Binds 1 potassium ion per subunit.</text>
</comment>
<comment type="subunit">
    <text evidence="1">Homodimer. Heterotetramer of two MnmE and two MnmG subunits.</text>
</comment>
<comment type="subcellular location">
    <subcellularLocation>
        <location evidence="1">Cytoplasm</location>
    </subcellularLocation>
</comment>
<comment type="similarity">
    <text evidence="1">Belongs to the TRAFAC class TrmE-Era-EngA-EngB-Septin-like GTPase superfamily. TrmE GTPase family.</text>
</comment>
<feature type="chain" id="PRO_0000188885" description="tRNA modification GTPase MnmE">
    <location>
        <begin position="1"/>
        <end position="463"/>
    </location>
</feature>
<feature type="domain" description="TrmE-type G">
    <location>
        <begin position="224"/>
        <end position="383"/>
    </location>
</feature>
<feature type="binding site" evidence="1">
    <location>
        <position position="26"/>
    </location>
    <ligand>
        <name>(6S)-5-formyl-5,6,7,8-tetrahydrofolate</name>
        <dbReference type="ChEBI" id="CHEBI:57457"/>
    </ligand>
</feature>
<feature type="binding site" evidence="1">
    <location>
        <position position="88"/>
    </location>
    <ligand>
        <name>(6S)-5-formyl-5,6,7,8-tetrahydrofolate</name>
        <dbReference type="ChEBI" id="CHEBI:57457"/>
    </ligand>
</feature>
<feature type="binding site" evidence="1">
    <location>
        <position position="127"/>
    </location>
    <ligand>
        <name>(6S)-5-formyl-5,6,7,8-tetrahydrofolate</name>
        <dbReference type="ChEBI" id="CHEBI:57457"/>
    </ligand>
</feature>
<feature type="binding site" evidence="1">
    <location>
        <begin position="234"/>
        <end position="239"/>
    </location>
    <ligand>
        <name>GTP</name>
        <dbReference type="ChEBI" id="CHEBI:37565"/>
    </ligand>
</feature>
<feature type="binding site" evidence="1">
    <location>
        <position position="234"/>
    </location>
    <ligand>
        <name>K(+)</name>
        <dbReference type="ChEBI" id="CHEBI:29103"/>
    </ligand>
</feature>
<feature type="binding site" evidence="1">
    <location>
        <position position="238"/>
    </location>
    <ligand>
        <name>Mg(2+)</name>
        <dbReference type="ChEBI" id="CHEBI:18420"/>
    </ligand>
</feature>
<feature type="binding site" evidence="1">
    <location>
        <begin position="253"/>
        <end position="259"/>
    </location>
    <ligand>
        <name>GTP</name>
        <dbReference type="ChEBI" id="CHEBI:37565"/>
    </ligand>
</feature>
<feature type="binding site" evidence="1">
    <location>
        <position position="253"/>
    </location>
    <ligand>
        <name>K(+)</name>
        <dbReference type="ChEBI" id="CHEBI:29103"/>
    </ligand>
</feature>
<feature type="binding site" evidence="1">
    <location>
        <position position="255"/>
    </location>
    <ligand>
        <name>K(+)</name>
        <dbReference type="ChEBI" id="CHEBI:29103"/>
    </ligand>
</feature>
<feature type="binding site" evidence="1">
    <location>
        <position position="258"/>
    </location>
    <ligand>
        <name>K(+)</name>
        <dbReference type="ChEBI" id="CHEBI:29103"/>
    </ligand>
</feature>
<feature type="binding site" evidence="1">
    <location>
        <position position="259"/>
    </location>
    <ligand>
        <name>Mg(2+)</name>
        <dbReference type="ChEBI" id="CHEBI:18420"/>
    </ligand>
</feature>
<feature type="binding site" evidence="1">
    <location>
        <begin position="278"/>
        <end position="281"/>
    </location>
    <ligand>
        <name>GTP</name>
        <dbReference type="ChEBI" id="CHEBI:37565"/>
    </ligand>
</feature>
<feature type="binding site" evidence="1">
    <location>
        <position position="463"/>
    </location>
    <ligand>
        <name>(6S)-5-formyl-5,6,7,8-tetrahydrofolate</name>
        <dbReference type="ChEBI" id="CHEBI:57457"/>
    </ligand>
</feature>
<protein>
    <recommendedName>
        <fullName evidence="1">tRNA modification GTPase MnmE</fullName>
        <ecNumber evidence="1">3.6.-.-</ecNumber>
    </recommendedName>
</protein>
<gene>
    <name evidence="1" type="primary">mnmE</name>
    <name evidence="1" type="synonym">thdF</name>
    <name evidence="1" type="synonym">trmE</name>
    <name type="ordered locus">lp_3682</name>
</gene>
<dbReference type="EC" id="3.6.-.-" evidence="1"/>
<dbReference type="EMBL" id="AL935263">
    <property type="protein sequence ID" value="CCC80631.1"/>
    <property type="molecule type" value="Genomic_DNA"/>
</dbReference>
<dbReference type="RefSeq" id="WP_003641622.1">
    <property type="nucleotide sequence ID" value="NC_004567.2"/>
</dbReference>
<dbReference type="RefSeq" id="YP_004891145.1">
    <property type="nucleotide sequence ID" value="NC_004567.2"/>
</dbReference>
<dbReference type="SMR" id="Q88RX5"/>
<dbReference type="STRING" id="220668.lp_3682"/>
<dbReference type="EnsemblBacteria" id="CCC80631">
    <property type="protein sequence ID" value="CCC80631"/>
    <property type="gene ID" value="lp_3682"/>
</dbReference>
<dbReference type="GeneID" id="77216677"/>
<dbReference type="KEGG" id="lpl:lp_3682"/>
<dbReference type="PATRIC" id="fig|220668.9.peg.3075"/>
<dbReference type="eggNOG" id="COG0486">
    <property type="taxonomic scope" value="Bacteria"/>
</dbReference>
<dbReference type="HOGENOM" id="CLU_019624_4_1_9"/>
<dbReference type="OrthoDB" id="9805918at2"/>
<dbReference type="PhylomeDB" id="Q88RX5"/>
<dbReference type="Proteomes" id="UP000000432">
    <property type="component" value="Chromosome"/>
</dbReference>
<dbReference type="GO" id="GO:0005829">
    <property type="term" value="C:cytosol"/>
    <property type="evidence" value="ECO:0007669"/>
    <property type="project" value="TreeGrafter"/>
</dbReference>
<dbReference type="GO" id="GO:0005525">
    <property type="term" value="F:GTP binding"/>
    <property type="evidence" value="ECO:0007669"/>
    <property type="project" value="UniProtKB-UniRule"/>
</dbReference>
<dbReference type="GO" id="GO:0003924">
    <property type="term" value="F:GTPase activity"/>
    <property type="evidence" value="ECO:0007669"/>
    <property type="project" value="UniProtKB-UniRule"/>
</dbReference>
<dbReference type="GO" id="GO:0046872">
    <property type="term" value="F:metal ion binding"/>
    <property type="evidence" value="ECO:0007669"/>
    <property type="project" value="UniProtKB-KW"/>
</dbReference>
<dbReference type="GO" id="GO:0030488">
    <property type="term" value="P:tRNA methylation"/>
    <property type="evidence" value="ECO:0007669"/>
    <property type="project" value="TreeGrafter"/>
</dbReference>
<dbReference type="GO" id="GO:0002098">
    <property type="term" value="P:tRNA wobble uridine modification"/>
    <property type="evidence" value="ECO:0007669"/>
    <property type="project" value="TreeGrafter"/>
</dbReference>
<dbReference type="CDD" id="cd04164">
    <property type="entry name" value="trmE"/>
    <property type="match status" value="1"/>
</dbReference>
<dbReference type="CDD" id="cd14858">
    <property type="entry name" value="TrmE_N"/>
    <property type="match status" value="1"/>
</dbReference>
<dbReference type="FunFam" id="3.30.1360.120:FF:000003">
    <property type="entry name" value="tRNA modification GTPase MnmE"/>
    <property type="match status" value="1"/>
</dbReference>
<dbReference type="FunFam" id="3.40.50.300:FF:000494">
    <property type="entry name" value="tRNA modification GTPase MnmE"/>
    <property type="match status" value="1"/>
</dbReference>
<dbReference type="Gene3D" id="3.40.50.300">
    <property type="entry name" value="P-loop containing nucleotide triphosphate hydrolases"/>
    <property type="match status" value="1"/>
</dbReference>
<dbReference type="Gene3D" id="3.30.1360.120">
    <property type="entry name" value="Probable tRNA modification gtpase trme, domain 1"/>
    <property type="match status" value="1"/>
</dbReference>
<dbReference type="Gene3D" id="1.20.120.430">
    <property type="entry name" value="tRNA modification GTPase MnmE domain 2"/>
    <property type="match status" value="1"/>
</dbReference>
<dbReference type="HAMAP" id="MF_00379">
    <property type="entry name" value="GTPase_MnmE"/>
    <property type="match status" value="1"/>
</dbReference>
<dbReference type="InterPro" id="IPR031168">
    <property type="entry name" value="G_TrmE"/>
</dbReference>
<dbReference type="InterPro" id="IPR006073">
    <property type="entry name" value="GTP-bd"/>
</dbReference>
<dbReference type="InterPro" id="IPR018948">
    <property type="entry name" value="GTP-bd_TrmE_N"/>
</dbReference>
<dbReference type="InterPro" id="IPR004520">
    <property type="entry name" value="GTPase_MnmE"/>
</dbReference>
<dbReference type="InterPro" id="IPR027368">
    <property type="entry name" value="MnmE_dom2"/>
</dbReference>
<dbReference type="InterPro" id="IPR025867">
    <property type="entry name" value="MnmE_helical"/>
</dbReference>
<dbReference type="InterPro" id="IPR027417">
    <property type="entry name" value="P-loop_NTPase"/>
</dbReference>
<dbReference type="InterPro" id="IPR005225">
    <property type="entry name" value="Small_GTP-bd"/>
</dbReference>
<dbReference type="InterPro" id="IPR027266">
    <property type="entry name" value="TrmE/GcvT_dom1"/>
</dbReference>
<dbReference type="NCBIfam" id="TIGR00450">
    <property type="entry name" value="mnmE_trmE_thdF"/>
    <property type="match status" value="1"/>
</dbReference>
<dbReference type="NCBIfam" id="NF003661">
    <property type="entry name" value="PRK05291.1-3"/>
    <property type="match status" value="1"/>
</dbReference>
<dbReference type="NCBIfam" id="TIGR00231">
    <property type="entry name" value="small_GTP"/>
    <property type="match status" value="1"/>
</dbReference>
<dbReference type="PANTHER" id="PTHR42714">
    <property type="entry name" value="TRNA MODIFICATION GTPASE GTPBP3"/>
    <property type="match status" value="1"/>
</dbReference>
<dbReference type="PANTHER" id="PTHR42714:SF2">
    <property type="entry name" value="TRNA MODIFICATION GTPASE GTPBP3, MITOCHONDRIAL"/>
    <property type="match status" value="1"/>
</dbReference>
<dbReference type="Pfam" id="PF01926">
    <property type="entry name" value="MMR_HSR1"/>
    <property type="match status" value="1"/>
</dbReference>
<dbReference type="Pfam" id="PF12631">
    <property type="entry name" value="MnmE_helical"/>
    <property type="match status" value="1"/>
</dbReference>
<dbReference type="Pfam" id="PF10396">
    <property type="entry name" value="TrmE_N"/>
    <property type="match status" value="1"/>
</dbReference>
<dbReference type="SUPFAM" id="SSF52540">
    <property type="entry name" value="P-loop containing nucleoside triphosphate hydrolases"/>
    <property type="match status" value="1"/>
</dbReference>
<dbReference type="SUPFAM" id="SSF116878">
    <property type="entry name" value="TrmE connector domain"/>
    <property type="match status" value="1"/>
</dbReference>
<dbReference type="PROSITE" id="PS51709">
    <property type="entry name" value="G_TRME"/>
    <property type="match status" value="1"/>
</dbReference>
<organism>
    <name type="scientific">Lactiplantibacillus plantarum (strain ATCC BAA-793 / NCIMB 8826 / WCFS1)</name>
    <name type="common">Lactobacillus plantarum</name>
    <dbReference type="NCBI Taxonomy" id="220668"/>
    <lineage>
        <taxon>Bacteria</taxon>
        <taxon>Bacillati</taxon>
        <taxon>Bacillota</taxon>
        <taxon>Bacilli</taxon>
        <taxon>Lactobacillales</taxon>
        <taxon>Lactobacillaceae</taxon>
        <taxon>Lactiplantibacillus</taxon>
    </lineage>
</organism>
<sequence length="463" mass="51036">MPTTTEFDTIAAISTPPGEGGISIIRISGDQTFNVVTQIFKGKDLSRVQSHTINYGHIVDPDTHQEVDEVMATVMRAPKTYTREDVVEINCHGGLVATNEILQLILSHGARMAEPGEFTKRAFLNGRLDLSQAEAVMDLIRAKTDKSMKVALNQLDGDLSKLIRHLRQDILDVLAQVEVNIDYPEYDAVETMTTKMLKEKATEVAQSINQLLATAKQGKVLREGLATAIIGRPNVGKSSLLNHLLHEDKAIVTDVAGTTRDVIEEYVNVRGVPLKLVDTAGIRDTEDKVEKIGVERSRKAIGAADLVLLVLDNSQPLTAEDRELLQETDQSKRIVILNKTDLPARLDQAELAQLVDLSDVLSMSVLEQSGVTQLEQRIAKMFFNEGIESSQNNVMVTNARHIGLLNQAKQALQDVQTGLAAGMPVDLVQIDMTRCWEFLGQITGDSYEDELLDQLFSQFCLGK</sequence>
<reference key="1">
    <citation type="journal article" date="2003" name="Proc. Natl. Acad. Sci. U.S.A.">
        <title>Complete genome sequence of Lactobacillus plantarum WCFS1.</title>
        <authorList>
            <person name="Kleerebezem M."/>
            <person name="Boekhorst J."/>
            <person name="van Kranenburg R."/>
            <person name="Molenaar D."/>
            <person name="Kuipers O.P."/>
            <person name="Leer R."/>
            <person name="Tarchini R."/>
            <person name="Peters S.A."/>
            <person name="Sandbrink H.M."/>
            <person name="Fiers M.W.E.J."/>
            <person name="Stiekema W."/>
            <person name="Klein Lankhorst R.M."/>
            <person name="Bron P.A."/>
            <person name="Hoffer S.M."/>
            <person name="Nierop Groot M.N."/>
            <person name="Kerkhoven R."/>
            <person name="De Vries M."/>
            <person name="Ursing B."/>
            <person name="De Vos W.M."/>
            <person name="Siezen R.J."/>
        </authorList>
    </citation>
    <scope>NUCLEOTIDE SEQUENCE [LARGE SCALE GENOMIC DNA]</scope>
    <source>
        <strain>ATCC BAA-793 / NCIMB 8826 / WCFS1</strain>
    </source>
</reference>
<reference key="2">
    <citation type="journal article" date="2012" name="J. Bacteriol.">
        <title>Complete resequencing and reannotation of the Lactobacillus plantarum WCFS1 genome.</title>
        <authorList>
            <person name="Siezen R.J."/>
            <person name="Francke C."/>
            <person name="Renckens B."/>
            <person name="Boekhorst J."/>
            <person name="Wels M."/>
            <person name="Kleerebezem M."/>
            <person name="van Hijum S.A."/>
        </authorList>
    </citation>
    <scope>NUCLEOTIDE SEQUENCE [LARGE SCALE GENOMIC DNA]</scope>
    <scope>GENOME REANNOTATION</scope>
    <source>
        <strain>ATCC BAA-793 / NCIMB 8826 / WCFS1</strain>
    </source>
</reference>
<keyword id="KW-0963">Cytoplasm</keyword>
<keyword id="KW-0342">GTP-binding</keyword>
<keyword id="KW-0378">Hydrolase</keyword>
<keyword id="KW-0460">Magnesium</keyword>
<keyword id="KW-0479">Metal-binding</keyword>
<keyword id="KW-0547">Nucleotide-binding</keyword>
<keyword id="KW-0630">Potassium</keyword>
<keyword id="KW-1185">Reference proteome</keyword>
<keyword id="KW-0819">tRNA processing</keyword>
<name>MNME_LACPL</name>
<proteinExistence type="inferred from homology"/>